<gene>
    <name type="primary">Dync1li2</name>
    <name type="synonym">Dncli2</name>
</gene>
<name>DC1L2_RAT</name>
<sequence length="497" mass="54745">MAPVGVEKKLLLGPNGPAVAAAGDLTSEEEEGQSLWSSILSEVSTRARSKLPSGKNILVFGEDGSGKTTLMTKLQGAEHGKKGRGLEYLYLSVHDEDRDDHTRCNVWILDGDLYHKGLLKFAVSAESLRETLVIFVADMSRPWTIMESLQKWASVLREHIDKMKIPPEEMRDLERKFMKDFQDYIEPEEGCQGSPQRRGPLTSGSDEDNVALPLGDNVLTHNLGIPVLVVCTKCDAVSILEKEHDYRDEHLDFIQAHLRGFCLQYGAALIYTSVKEEKNLDLLYKYIVHKTYGFHFTIPALVVEKDAVFIPAGWDNEKKIAILHENFTTVKPEDAYEDFIVKPPVRKLVHDKELAAEDEQVFLMKQQESPARGPSGSPRTQGRGGPASVPSASPGTSVKKPDPNIKNNAASEGVLASFFNSLLSKKTGSPGSPSAGGVQSTAKKSGTEGEPQSFRSLTEQCCQTGQKTVLSNVQEELDRMTRKPDSMVTNSSTENEA</sequence>
<keyword id="KW-0067">ATP-binding</keyword>
<keyword id="KW-0963">Cytoplasm</keyword>
<keyword id="KW-0206">Cytoskeleton</keyword>
<keyword id="KW-0243">Dynein</keyword>
<keyword id="KW-0488">Methylation</keyword>
<keyword id="KW-0493">Microtubule</keyword>
<keyword id="KW-0505">Motor protein</keyword>
<keyword id="KW-0547">Nucleotide-binding</keyword>
<keyword id="KW-0597">Phosphoprotein</keyword>
<keyword id="KW-1185">Reference proteome</keyword>
<keyword id="KW-0813">Transport</keyword>
<protein>
    <recommendedName>
        <fullName>Cytoplasmic dynein 1 light intermediate chain 2</fullName>
    </recommendedName>
    <alternativeName>
        <fullName>Dynein light intermediate chain 2, cytosolic</fullName>
        <shortName>LIC-2</shortName>
    </alternativeName>
    <alternativeName>
        <fullName>LIC53/55</fullName>
    </alternativeName>
</protein>
<organism>
    <name type="scientific">Rattus norvegicus</name>
    <name type="common">Rat</name>
    <dbReference type="NCBI Taxonomy" id="10116"/>
    <lineage>
        <taxon>Eukaryota</taxon>
        <taxon>Metazoa</taxon>
        <taxon>Chordata</taxon>
        <taxon>Craniata</taxon>
        <taxon>Vertebrata</taxon>
        <taxon>Euteleostomi</taxon>
        <taxon>Mammalia</taxon>
        <taxon>Eutheria</taxon>
        <taxon>Euarchontoglires</taxon>
        <taxon>Glires</taxon>
        <taxon>Rodentia</taxon>
        <taxon>Myomorpha</taxon>
        <taxon>Muroidea</taxon>
        <taxon>Muridae</taxon>
        <taxon>Murinae</taxon>
        <taxon>Rattus</taxon>
    </lineage>
</organism>
<proteinExistence type="evidence at protein level"/>
<evidence type="ECO:0000250" key="1">
    <source>
        <dbReference type="UniProtKB" id="O43237"/>
    </source>
</evidence>
<evidence type="ECO:0000255" key="2"/>
<evidence type="ECO:0000256" key="3">
    <source>
        <dbReference type="SAM" id="MobiDB-lite"/>
    </source>
</evidence>
<evidence type="ECO:0000269" key="4">
    <source>
    </source>
</evidence>
<evidence type="ECO:0000305" key="5"/>
<evidence type="ECO:0007744" key="6">
    <source>
    </source>
</evidence>
<reference key="1">
    <citation type="journal article" date="1995" name="J. Cell Sci.">
        <title>Molecular analysis of a cytoplasmic dynein light intermediate chain reveals homology to a family of ATPases.</title>
        <authorList>
            <person name="Hughes S.M."/>
            <person name="Vaughan K.T."/>
            <person name="Herskovits J.S."/>
            <person name="Vallee R.B."/>
        </authorList>
    </citation>
    <scope>NUCLEOTIDE SEQUENCE [MRNA]</scope>
    <source>
        <tissue>Brain</tissue>
    </source>
</reference>
<reference key="2">
    <citation type="journal article" date="2000" name="J. Biol. Chem.">
        <title>Light intermediate chain 1 defines a functional subfraction of cytoplasmic dynein which binds to pericentrin.</title>
        <authorList>
            <person name="Tynan S.H."/>
            <person name="Purohit A."/>
            <person name="Doxsey S.J."/>
            <person name="Vallee R.B."/>
        </authorList>
    </citation>
    <scope>SUBUNIT</scope>
</reference>
<reference key="3">
    <citation type="journal article" date="2012" name="Nat. Commun.">
        <title>Quantitative maps of protein phosphorylation sites across 14 different rat organs and tissues.</title>
        <authorList>
            <person name="Lundby A."/>
            <person name="Secher A."/>
            <person name="Lage K."/>
            <person name="Nordsborg N.B."/>
            <person name="Dmytriyev A."/>
            <person name="Lundby C."/>
            <person name="Olsen J.V."/>
        </authorList>
    </citation>
    <scope>PHOSPHORYLATION [LARGE SCALE ANALYSIS] AT SER-194</scope>
    <scope>IDENTIFICATION BY MASS SPECTROMETRY [LARGE SCALE ANALYSIS]</scope>
</reference>
<dbReference type="EMBL" id="U15138">
    <property type="protein sequence ID" value="AAA80334.1"/>
    <property type="molecule type" value="mRNA"/>
</dbReference>
<dbReference type="PIR" id="I55514">
    <property type="entry name" value="I55514"/>
</dbReference>
<dbReference type="RefSeq" id="NP_112288.1">
    <property type="nucleotide sequence ID" value="NM_031026.3"/>
</dbReference>
<dbReference type="SMR" id="Q62698"/>
<dbReference type="BioGRID" id="249555">
    <property type="interactions" value="2"/>
</dbReference>
<dbReference type="FunCoup" id="Q62698">
    <property type="interactions" value="4496"/>
</dbReference>
<dbReference type="IntAct" id="Q62698">
    <property type="interactions" value="1"/>
</dbReference>
<dbReference type="STRING" id="10116.ENSRNOP00000029646"/>
<dbReference type="iPTMnet" id="Q62698"/>
<dbReference type="PhosphoSitePlus" id="Q62698"/>
<dbReference type="SwissPalm" id="Q62698"/>
<dbReference type="jPOST" id="Q62698"/>
<dbReference type="PaxDb" id="10116-ENSRNOP00000029646"/>
<dbReference type="Ensembl" id="ENSRNOT00000034472.5">
    <property type="protein sequence ID" value="ENSRNOP00000029646.2"/>
    <property type="gene ID" value="ENSRNOG00000025791.8"/>
</dbReference>
<dbReference type="GeneID" id="81655"/>
<dbReference type="KEGG" id="rno:81655"/>
<dbReference type="UCSC" id="RGD:621130">
    <property type="organism name" value="rat"/>
</dbReference>
<dbReference type="AGR" id="RGD:621130"/>
<dbReference type="CTD" id="1783"/>
<dbReference type="RGD" id="621130">
    <property type="gene designation" value="Dync1li2"/>
</dbReference>
<dbReference type="eggNOG" id="KOG3905">
    <property type="taxonomic scope" value="Eukaryota"/>
</dbReference>
<dbReference type="GeneTree" id="ENSGT00390000008295"/>
<dbReference type="HOGENOM" id="CLU_021937_2_1_1"/>
<dbReference type="InParanoid" id="Q62698"/>
<dbReference type="OMA" id="FKHNVID"/>
<dbReference type="OrthoDB" id="27603at2759"/>
<dbReference type="PhylomeDB" id="Q62698"/>
<dbReference type="TreeFam" id="TF352602"/>
<dbReference type="Reactome" id="R-RNO-141444">
    <property type="pathway name" value="Amplification of signal from unattached kinetochores via a MAD2 inhibitory signal"/>
</dbReference>
<dbReference type="Reactome" id="R-RNO-2132295">
    <property type="pathway name" value="MHC class II antigen presentation"/>
</dbReference>
<dbReference type="Reactome" id="R-RNO-2467813">
    <property type="pathway name" value="Separation of Sister Chromatids"/>
</dbReference>
<dbReference type="Reactome" id="R-RNO-2500257">
    <property type="pathway name" value="Resolution of Sister Chromatid Cohesion"/>
</dbReference>
<dbReference type="Reactome" id="R-RNO-3371497">
    <property type="pathway name" value="HSP90 chaperone cycle for steroid hormone receptors (SHR) in the presence of ligand"/>
</dbReference>
<dbReference type="Reactome" id="R-RNO-5663220">
    <property type="pathway name" value="RHO GTPases Activate Formins"/>
</dbReference>
<dbReference type="Reactome" id="R-RNO-6807878">
    <property type="pathway name" value="COPI-mediated anterograde transport"/>
</dbReference>
<dbReference type="Reactome" id="R-RNO-6811436">
    <property type="pathway name" value="COPI-independent Golgi-to-ER retrograde traffic"/>
</dbReference>
<dbReference type="Reactome" id="R-RNO-68877">
    <property type="pathway name" value="Mitotic Prometaphase"/>
</dbReference>
<dbReference type="Reactome" id="R-RNO-9646399">
    <property type="pathway name" value="Aggrephagy"/>
</dbReference>
<dbReference type="Reactome" id="R-RNO-9648025">
    <property type="pathway name" value="EML4 and NUDC in mitotic spindle formation"/>
</dbReference>
<dbReference type="PRO" id="PR:Q62698"/>
<dbReference type="Proteomes" id="UP000002494">
    <property type="component" value="Chromosome 19"/>
</dbReference>
<dbReference type="Bgee" id="ENSRNOG00000025791">
    <property type="expression patterns" value="Expressed in Ammon's horn and 20 other cell types or tissues"/>
</dbReference>
<dbReference type="ExpressionAtlas" id="Q62698">
    <property type="expression patterns" value="baseline and differential"/>
</dbReference>
<dbReference type="GO" id="GO:0005813">
    <property type="term" value="C:centrosome"/>
    <property type="evidence" value="ECO:0000314"/>
    <property type="project" value="RGD"/>
</dbReference>
<dbReference type="GO" id="GO:0005868">
    <property type="term" value="C:cytoplasmic dynein complex"/>
    <property type="evidence" value="ECO:0000318"/>
    <property type="project" value="GO_Central"/>
</dbReference>
<dbReference type="GO" id="GO:0030286">
    <property type="term" value="C:dynein complex"/>
    <property type="evidence" value="ECO:0000266"/>
    <property type="project" value="RGD"/>
</dbReference>
<dbReference type="GO" id="GO:0000776">
    <property type="term" value="C:kinetochore"/>
    <property type="evidence" value="ECO:0000314"/>
    <property type="project" value="RGD"/>
</dbReference>
<dbReference type="GO" id="GO:0005770">
    <property type="term" value="C:late endosome"/>
    <property type="evidence" value="ECO:0000314"/>
    <property type="project" value="RGD"/>
</dbReference>
<dbReference type="GO" id="GO:0005874">
    <property type="term" value="C:microtubule"/>
    <property type="evidence" value="ECO:0007669"/>
    <property type="project" value="UniProtKB-KW"/>
</dbReference>
<dbReference type="GO" id="GO:0005524">
    <property type="term" value="F:ATP binding"/>
    <property type="evidence" value="ECO:0007669"/>
    <property type="project" value="UniProtKB-KW"/>
</dbReference>
<dbReference type="GO" id="GO:0045504">
    <property type="term" value="F:dynein heavy chain binding"/>
    <property type="evidence" value="ECO:0000318"/>
    <property type="project" value="GO_Central"/>
</dbReference>
<dbReference type="GO" id="GO:0042802">
    <property type="term" value="F:identical protein binding"/>
    <property type="evidence" value="ECO:0000353"/>
    <property type="project" value="RGD"/>
</dbReference>
<dbReference type="GO" id="GO:1990090">
    <property type="term" value="P:cellular response to nerve growth factor stimulus"/>
    <property type="evidence" value="ECO:0000314"/>
    <property type="project" value="RGD"/>
</dbReference>
<dbReference type="GO" id="GO:0051642">
    <property type="term" value="P:centrosome localization"/>
    <property type="evidence" value="ECO:0000266"/>
    <property type="project" value="RGD"/>
</dbReference>
<dbReference type="GO" id="GO:0000226">
    <property type="term" value="P:microtubule cytoskeleton organization"/>
    <property type="evidence" value="ECO:0000266"/>
    <property type="project" value="RGD"/>
</dbReference>
<dbReference type="GO" id="GO:0007018">
    <property type="term" value="P:microtubule-based movement"/>
    <property type="evidence" value="ECO:0000318"/>
    <property type="project" value="GO_Central"/>
</dbReference>
<dbReference type="Gene3D" id="3.40.50.300">
    <property type="entry name" value="P-loop containing nucleotide triphosphate hydrolases"/>
    <property type="match status" value="1"/>
</dbReference>
<dbReference type="InterPro" id="IPR008467">
    <property type="entry name" value="Dynein1_light_intermed_chain"/>
</dbReference>
<dbReference type="InterPro" id="IPR022780">
    <property type="entry name" value="Dynein_light_int_chain"/>
</dbReference>
<dbReference type="InterPro" id="IPR027417">
    <property type="entry name" value="P-loop_NTPase"/>
</dbReference>
<dbReference type="PANTHER" id="PTHR12688:SF1">
    <property type="entry name" value="CYTOPLASMIC DYNEIN 1 LIGHT INTERMEDIATE CHAIN 2"/>
    <property type="match status" value="1"/>
</dbReference>
<dbReference type="PANTHER" id="PTHR12688">
    <property type="entry name" value="DYNEIN LIGHT INTERMEDIATE CHAIN"/>
    <property type="match status" value="1"/>
</dbReference>
<dbReference type="Pfam" id="PF05783">
    <property type="entry name" value="DLIC"/>
    <property type="match status" value="1"/>
</dbReference>
<dbReference type="SUPFAM" id="SSF52540">
    <property type="entry name" value="P-loop containing nucleoside triphosphate hydrolases"/>
    <property type="match status" value="1"/>
</dbReference>
<accession>Q62698</accession>
<comment type="function">
    <text evidence="1">Acts as one of several non-catalytic accessory components of the cytoplasmic dynein 1 complex that are thought to be involved in linking dynein to cargos and to adapter proteins that regulate dynein function. Cytoplasmic dynein 1 acts as a motor for the intracellular retrograde motility of vesicles and organelles along microtubules. May play a role in binding dynein to membranous organelles or chromosomes.</text>
</comment>
<comment type="subunit">
    <text evidence="4 5">Homodimer (Probable). The cytoplasmic dynein 1 complex consists of two catalytic heavy chains (HCs) and a number of non-catalytic subunits presented by intermediate chains (ICs), light intermediate chains (LICs) and light chains (LCs); the composition seems to vary in respect to the IC, LIC and LC composition. The heavy chain homodimer serves as a scaffold for the probable homodimeric assembly of the respective non-catalytic subunits. The ICs and LICs bind directly to the HC dimer and the LCs assemble on the IC dimer. Self-associates. Interacts with DYNC1H1; DYNC1LI1 and DYNC1LI2 bind mutually exclusive to DYNC1H1 (PubMed:10893222).</text>
</comment>
<comment type="subcellular location">
    <subcellularLocation>
        <location evidence="1">Cytoplasm</location>
        <location evidence="1">Cytoskeleton</location>
    </subcellularLocation>
</comment>
<comment type="tissue specificity">
    <text>Ubiquitous.</text>
</comment>
<comment type="similarity">
    <text evidence="5">Belongs to the dynein light intermediate chain family.</text>
</comment>
<feature type="chain" id="PRO_0000114674" description="Cytoplasmic dynein 1 light intermediate chain 2">
    <location>
        <begin position="1"/>
        <end position="497"/>
    </location>
</feature>
<feature type="region of interest" description="Disordered" evidence="3">
    <location>
        <begin position="187"/>
        <end position="206"/>
    </location>
</feature>
<feature type="region of interest" description="Disordered" evidence="3">
    <location>
        <begin position="366"/>
        <end position="408"/>
    </location>
</feature>
<feature type="region of interest" description="Disordered" evidence="3">
    <location>
        <begin position="423"/>
        <end position="461"/>
    </location>
</feature>
<feature type="region of interest" description="Disordered" evidence="3">
    <location>
        <begin position="474"/>
        <end position="497"/>
    </location>
</feature>
<feature type="compositionally biased region" description="Polar residues" evidence="3">
    <location>
        <begin position="423"/>
        <end position="444"/>
    </location>
</feature>
<feature type="compositionally biased region" description="Basic and acidic residues" evidence="3">
    <location>
        <begin position="476"/>
        <end position="485"/>
    </location>
</feature>
<feature type="compositionally biased region" description="Polar residues" evidence="3">
    <location>
        <begin position="487"/>
        <end position="497"/>
    </location>
</feature>
<feature type="binding site" evidence="2">
    <location>
        <begin position="61"/>
        <end position="68"/>
    </location>
    <ligand>
        <name>ATP</name>
        <dbReference type="ChEBI" id="CHEBI:30616"/>
    </ligand>
</feature>
<feature type="modified residue" description="Phosphoserine" evidence="6">
    <location>
        <position position="194"/>
    </location>
</feature>
<feature type="modified residue" description="Phosphoserine" evidence="1">
    <location>
        <position position="369"/>
    </location>
</feature>
<feature type="modified residue" description="Phosphoserine" evidence="1">
    <location>
        <position position="377"/>
    </location>
</feature>
<feature type="modified residue" description="Omega-N-methylarginine" evidence="1">
    <location>
        <position position="383"/>
    </location>
</feature>
<feature type="modified residue" description="Phosphothreonine" evidence="1">
    <location>
        <position position="427"/>
    </location>
</feature>
<feature type="modified residue" description="Phosphoserine" evidence="1">
    <location>
        <position position="429"/>
    </location>
</feature>
<feature type="modified residue" description="Phosphoserine" evidence="1">
    <location>
        <position position="432"/>
    </location>
</feature>